<keyword id="KW-0963">Cytoplasm</keyword>
<keyword id="KW-0488">Methylation</keyword>
<keyword id="KW-0648">Protein biosynthesis</keyword>
<keyword id="KW-1185">Reference proteome</keyword>
<protein>
    <recommendedName>
        <fullName evidence="1">Peptide chain release factor 1</fullName>
        <shortName evidence="1">RF-1</shortName>
    </recommendedName>
</protein>
<dbReference type="EMBL" id="AE009951">
    <property type="protein sequence ID" value="AAL95528.1"/>
    <property type="molecule type" value="Genomic_DNA"/>
</dbReference>
<dbReference type="RefSeq" id="NP_604229.1">
    <property type="nucleotide sequence ID" value="NC_003454.1"/>
</dbReference>
<dbReference type="SMR" id="Q8R5W0"/>
<dbReference type="FunCoup" id="Q8R5W0">
    <property type="interactions" value="344"/>
</dbReference>
<dbReference type="STRING" id="190304.FN1332"/>
<dbReference type="PaxDb" id="190304-FN1332"/>
<dbReference type="EnsemblBacteria" id="AAL95528">
    <property type="protein sequence ID" value="AAL95528"/>
    <property type="gene ID" value="FN1332"/>
</dbReference>
<dbReference type="KEGG" id="fnu:FN1332"/>
<dbReference type="PATRIC" id="fig|190304.8.peg.1896"/>
<dbReference type="eggNOG" id="COG0216">
    <property type="taxonomic scope" value="Bacteria"/>
</dbReference>
<dbReference type="HOGENOM" id="CLU_036856_0_1_0"/>
<dbReference type="InParanoid" id="Q8R5W0"/>
<dbReference type="BioCyc" id="FNUC190304:G1FZS-1907-MONOMER"/>
<dbReference type="Proteomes" id="UP000002521">
    <property type="component" value="Chromosome"/>
</dbReference>
<dbReference type="GO" id="GO:0005737">
    <property type="term" value="C:cytoplasm"/>
    <property type="evidence" value="ECO:0007669"/>
    <property type="project" value="UniProtKB-SubCell"/>
</dbReference>
<dbReference type="GO" id="GO:0016149">
    <property type="term" value="F:translation release factor activity, codon specific"/>
    <property type="evidence" value="ECO:0007669"/>
    <property type="project" value="UniProtKB-UniRule"/>
</dbReference>
<dbReference type="FunFam" id="3.30.160.20:FF:000004">
    <property type="entry name" value="Peptide chain release factor 1"/>
    <property type="match status" value="1"/>
</dbReference>
<dbReference type="FunFam" id="3.30.70.1660:FF:000002">
    <property type="entry name" value="Peptide chain release factor 1"/>
    <property type="match status" value="1"/>
</dbReference>
<dbReference type="FunFam" id="3.30.70.1660:FF:000004">
    <property type="entry name" value="Peptide chain release factor 1"/>
    <property type="match status" value="1"/>
</dbReference>
<dbReference type="Gene3D" id="3.30.160.20">
    <property type="match status" value="1"/>
</dbReference>
<dbReference type="Gene3D" id="3.30.70.1660">
    <property type="match status" value="1"/>
</dbReference>
<dbReference type="Gene3D" id="6.10.140.1950">
    <property type="match status" value="1"/>
</dbReference>
<dbReference type="HAMAP" id="MF_00093">
    <property type="entry name" value="Rel_fac_1"/>
    <property type="match status" value="1"/>
</dbReference>
<dbReference type="InterPro" id="IPR005139">
    <property type="entry name" value="PCRF"/>
</dbReference>
<dbReference type="InterPro" id="IPR000352">
    <property type="entry name" value="Pep_chain_release_fac_I"/>
</dbReference>
<dbReference type="InterPro" id="IPR045853">
    <property type="entry name" value="Pep_chain_release_fac_I_sf"/>
</dbReference>
<dbReference type="InterPro" id="IPR050057">
    <property type="entry name" value="Prokaryotic/Mito_RF"/>
</dbReference>
<dbReference type="InterPro" id="IPR004373">
    <property type="entry name" value="RF-1"/>
</dbReference>
<dbReference type="NCBIfam" id="TIGR00019">
    <property type="entry name" value="prfA"/>
    <property type="match status" value="1"/>
</dbReference>
<dbReference type="NCBIfam" id="NF001859">
    <property type="entry name" value="PRK00591.1"/>
    <property type="match status" value="1"/>
</dbReference>
<dbReference type="PANTHER" id="PTHR43804">
    <property type="entry name" value="LD18447P"/>
    <property type="match status" value="1"/>
</dbReference>
<dbReference type="PANTHER" id="PTHR43804:SF7">
    <property type="entry name" value="LD18447P"/>
    <property type="match status" value="1"/>
</dbReference>
<dbReference type="Pfam" id="PF03462">
    <property type="entry name" value="PCRF"/>
    <property type="match status" value="1"/>
</dbReference>
<dbReference type="Pfam" id="PF00472">
    <property type="entry name" value="RF-1"/>
    <property type="match status" value="1"/>
</dbReference>
<dbReference type="SMART" id="SM00937">
    <property type="entry name" value="PCRF"/>
    <property type="match status" value="1"/>
</dbReference>
<dbReference type="SUPFAM" id="SSF75620">
    <property type="entry name" value="Release factor"/>
    <property type="match status" value="1"/>
</dbReference>
<dbReference type="PROSITE" id="PS00745">
    <property type="entry name" value="RF_PROK_I"/>
    <property type="match status" value="1"/>
</dbReference>
<gene>
    <name evidence="1" type="primary">prfA</name>
    <name type="ordered locus">FN1332</name>
</gene>
<evidence type="ECO:0000255" key="1">
    <source>
        <dbReference type="HAMAP-Rule" id="MF_00093"/>
    </source>
</evidence>
<accession>Q8R5W0</accession>
<feature type="chain" id="PRO_0000177674" description="Peptide chain release factor 1">
    <location>
        <begin position="1"/>
        <end position="365"/>
    </location>
</feature>
<feature type="modified residue" description="N5-methylglutamine" evidence="1">
    <location>
        <position position="242"/>
    </location>
</feature>
<proteinExistence type="inferred from homology"/>
<organism>
    <name type="scientific">Fusobacterium nucleatum subsp. nucleatum (strain ATCC 25586 / DSM 15643 / BCRC 10681 / CIP 101130 / JCM 8532 / KCTC 2640 / LMG 13131 / VPI 4355)</name>
    <dbReference type="NCBI Taxonomy" id="190304"/>
    <lineage>
        <taxon>Bacteria</taxon>
        <taxon>Fusobacteriati</taxon>
        <taxon>Fusobacteriota</taxon>
        <taxon>Fusobacteriia</taxon>
        <taxon>Fusobacteriales</taxon>
        <taxon>Fusobacteriaceae</taxon>
        <taxon>Fusobacterium</taxon>
    </lineage>
</organism>
<name>RF1_FUSNN</name>
<comment type="function">
    <text evidence="1">Peptide chain release factor 1 directs the termination of translation in response to the peptide chain termination codons UAG and UAA.</text>
</comment>
<comment type="subcellular location">
    <subcellularLocation>
        <location evidence="1">Cytoplasm</location>
    </subcellularLocation>
</comment>
<comment type="PTM">
    <text evidence="1">Methylated by PrmC. Methylation increases the termination efficiency of RF1.</text>
</comment>
<comment type="similarity">
    <text evidence="1">Belongs to the prokaryotic/mitochondrial release factor family.</text>
</comment>
<sequence length="365" mass="41864">MINLRGVKMFDKLEEVVARYDELNKMLVSPEVLADSKKMIECNKAINEITEIVEKYKEYKKYVDDIEFIKESFKTEKDSDMKEMLNEELKEAEEKLPKLEEELKILLLPKDKNDDKNVIVEIRGGAGGDEAALFAADLFRMYSRYAERKKWKIEIIEKQDGELNGLKEIAFTIIGLGAYSRLKFESGVHRVQRVPKTEASGRIHTSTATVAVLPEVEDIQEVTVDPKDLKIDTYRSGGAGGQHVNMTDSAVRITHLPTGIVVQCQDERSQLKNREKAMKHLLTKLYEMEQEKQRSEVESERRLQVGTGDRAEKIRTYNFPDGRITDHRIKLTVHQLEAFLDGDIDEMIDALITFHQAELLSASEQ</sequence>
<reference key="1">
    <citation type="journal article" date="2002" name="J. Bacteriol.">
        <title>Genome sequence and analysis of the oral bacterium Fusobacterium nucleatum strain ATCC 25586.</title>
        <authorList>
            <person name="Kapatral V."/>
            <person name="Anderson I."/>
            <person name="Ivanova N."/>
            <person name="Reznik G."/>
            <person name="Los T."/>
            <person name="Lykidis A."/>
            <person name="Bhattacharyya A."/>
            <person name="Bartman A."/>
            <person name="Gardner W."/>
            <person name="Grechkin G."/>
            <person name="Zhu L."/>
            <person name="Vasieva O."/>
            <person name="Chu L."/>
            <person name="Kogan Y."/>
            <person name="Chaga O."/>
            <person name="Goltsman E."/>
            <person name="Bernal A."/>
            <person name="Larsen N."/>
            <person name="D'Souza M."/>
            <person name="Walunas T."/>
            <person name="Pusch G."/>
            <person name="Haselkorn R."/>
            <person name="Fonstein M."/>
            <person name="Kyrpides N.C."/>
            <person name="Overbeek R."/>
        </authorList>
    </citation>
    <scope>NUCLEOTIDE SEQUENCE [LARGE SCALE GENOMIC DNA]</scope>
    <source>
        <strain>ATCC 25586 / DSM 15643 / BCRC 10681 / CIP 101130 / JCM 8532 / KCTC 2640 / LMG 13131 / VPI 4355</strain>
    </source>
</reference>